<protein>
    <recommendedName>
        <fullName evidence="1">Glycine cleavage system H protein</fullName>
    </recommendedName>
</protein>
<organism>
    <name type="scientific">Shewanella oneidensis (strain ATCC 700550 / JCM 31522 / CIP 106686 / LMG 19005 / NCIMB 14063 / MR-1)</name>
    <dbReference type="NCBI Taxonomy" id="211586"/>
    <lineage>
        <taxon>Bacteria</taxon>
        <taxon>Pseudomonadati</taxon>
        <taxon>Pseudomonadota</taxon>
        <taxon>Gammaproteobacteria</taxon>
        <taxon>Alteromonadales</taxon>
        <taxon>Shewanellaceae</taxon>
        <taxon>Shewanella</taxon>
    </lineage>
</organism>
<accession>Q8EIQ7</accession>
<gene>
    <name evidence="1" type="primary">gcvH</name>
    <name type="ordered locus">SO_0780</name>
</gene>
<keyword id="KW-0450">Lipoyl</keyword>
<keyword id="KW-1185">Reference proteome</keyword>
<name>GCSH_SHEON</name>
<dbReference type="EMBL" id="AE014299">
    <property type="protein sequence ID" value="AAN53856.1"/>
    <property type="molecule type" value="Genomic_DNA"/>
</dbReference>
<dbReference type="RefSeq" id="NP_716411.1">
    <property type="nucleotide sequence ID" value="NC_004347.2"/>
</dbReference>
<dbReference type="RefSeq" id="WP_011071083.1">
    <property type="nucleotide sequence ID" value="NZ_CP053946.1"/>
</dbReference>
<dbReference type="SMR" id="Q8EIQ7"/>
<dbReference type="STRING" id="211586.SO_0780"/>
<dbReference type="PaxDb" id="211586-SO_0780"/>
<dbReference type="GeneID" id="94729424"/>
<dbReference type="KEGG" id="son:SO_0780"/>
<dbReference type="PATRIC" id="fig|211586.12.peg.750"/>
<dbReference type="eggNOG" id="COG0509">
    <property type="taxonomic scope" value="Bacteria"/>
</dbReference>
<dbReference type="HOGENOM" id="CLU_097408_2_1_6"/>
<dbReference type="OrthoDB" id="9796712at2"/>
<dbReference type="PhylomeDB" id="Q8EIQ7"/>
<dbReference type="BioCyc" id="SONE211586:G1GMP-732-MONOMER"/>
<dbReference type="Proteomes" id="UP000008186">
    <property type="component" value="Chromosome"/>
</dbReference>
<dbReference type="GO" id="GO:0005829">
    <property type="term" value="C:cytosol"/>
    <property type="evidence" value="ECO:0000318"/>
    <property type="project" value="GO_Central"/>
</dbReference>
<dbReference type="GO" id="GO:0005960">
    <property type="term" value="C:glycine cleavage complex"/>
    <property type="evidence" value="ECO:0007669"/>
    <property type="project" value="InterPro"/>
</dbReference>
<dbReference type="GO" id="GO:0019464">
    <property type="term" value="P:glycine decarboxylation via glycine cleavage system"/>
    <property type="evidence" value="ECO:0007669"/>
    <property type="project" value="UniProtKB-UniRule"/>
</dbReference>
<dbReference type="CDD" id="cd06848">
    <property type="entry name" value="GCS_H"/>
    <property type="match status" value="1"/>
</dbReference>
<dbReference type="FunFam" id="2.40.50.100:FF:000011">
    <property type="entry name" value="Glycine cleavage system H protein"/>
    <property type="match status" value="1"/>
</dbReference>
<dbReference type="Gene3D" id="2.40.50.100">
    <property type="match status" value="1"/>
</dbReference>
<dbReference type="HAMAP" id="MF_00272">
    <property type="entry name" value="GcvH"/>
    <property type="match status" value="1"/>
</dbReference>
<dbReference type="InterPro" id="IPR003016">
    <property type="entry name" value="2-oxoA_DH_lipoyl-BS"/>
</dbReference>
<dbReference type="InterPro" id="IPR000089">
    <property type="entry name" value="Biotin_lipoyl"/>
</dbReference>
<dbReference type="InterPro" id="IPR002930">
    <property type="entry name" value="GCV_H"/>
</dbReference>
<dbReference type="InterPro" id="IPR033753">
    <property type="entry name" value="GCV_H/Fam206"/>
</dbReference>
<dbReference type="InterPro" id="IPR017453">
    <property type="entry name" value="GCV_H_sub"/>
</dbReference>
<dbReference type="InterPro" id="IPR011053">
    <property type="entry name" value="Single_hybrid_motif"/>
</dbReference>
<dbReference type="NCBIfam" id="TIGR00527">
    <property type="entry name" value="gcvH"/>
    <property type="match status" value="1"/>
</dbReference>
<dbReference type="NCBIfam" id="NF002270">
    <property type="entry name" value="PRK01202.1"/>
    <property type="match status" value="1"/>
</dbReference>
<dbReference type="PANTHER" id="PTHR11715">
    <property type="entry name" value="GLYCINE CLEAVAGE SYSTEM H PROTEIN"/>
    <property type="match status" value="1"/>
</dbReference>
<dbReference type="PANTHER" id="PTHR11715:SF3">
    <property type="entry name" value="GLYCINE CLEAVAGE SYSTEM H PROTEIN-RELATED"/>
    <property type="match status" value="1"/>
</dbReference>
<dbReference type="Pfam" id="PF01597">
    <property type="entry name" value="GCV_H"/>
    <property type="match status" value="1"/>
</dbReference>
<dbReference type="SUPFAM" id="SSF51230">
    <property type="entry name" value="Single hybrid motif"/>
    <property type="match status" value="1"/>
</dbReference>
<dbReference type="PROSITE" id="PS50968">
    <property type="entry name" value="BIOTINYL_LIPOYL"/>
    <property type="match status" value="1"/>
</dbReference>
<dbReference type="PROSITE" id="PS00189">
    <property type="entry name" value="LIPOYL"/>
    <property type="match status" value="1"/>
</dbReference>
<evidence type="ECO:0000255" key="1">
    <source>
        <dbReference type="HAMAP-Rule" id="MF_00272"/>
    </source>
</evidence>
<evidence type="ECO:0000255" key="2">
    <source>
        <dbReference type="PROSITE-ProRule" id="PRU01066"/>
    </source>
</evidence>
<reference key="1">
    <citation type="journal article" date="2002" name="Nat. Biotechnol.">
        <title>Genome sequence of the dissimilatory metal ion-reducing bacterium Shewanella oneidensis.</title>
        <authorList>
            <person name="Heidelberg J.F."/>
            <person name="Paulsen I.T."/>
            <person name="Nelson K.E."/>
            <person name="Gaidos E.J."/>
            <person name="Nelson W.C."/>
            <person name="Read T.D."/>
            <person name="Eisen J.A."/>
            <person name="Seshadri R."/>
            <person name="Ward N.L."/>
            <person name="Methe B.A."/>
            <person name="Clayton R.A."/>
            <person name="Meyer T."/>
            <person name="Tsapin A."/>
            <person name="Scott J."/>
            <person name="Beanan M.J."/>
            <person name="Brinkac L.M."/>
            <person name="Daugherty S.C."/>
            <person name="DeBoy R.T."/>
            <person name="Dodson R.J."/>
            <person name="Durkin A.S."/>
            <person name="Haft D.H."/>
            <person name="Kolonay J.F."/>
            <person name="Madupu R."/>
            <person name="Peterson J.D."/>
            <person name="Umayam L.A."/>
            <person name="White O."/>
            <person name="Wolf A.M."/>
            <person name="Vamathevan J.J."/>
            <person name="Weidman J.F."/>
            <person name="Impraim M."/>
            <person name="Lee K."/>
            <person name="Berry K.J."/>
            <person name="Lee C."/>
            <person name="Mueller J."/>
            <person name="Khouri H.M."/>
            <person name="Gill J."/>
            <person name="Utterback T.R."/>
            <person name="McDonald L.A."/>
            <person name="Feldblyum T.V."/>
            <person name="Smith H.O."/>
            <person name="Venter J.C."/>
            <person name="Nealson K.H."/>
            <person name="Fraser C.M."/>
        </authorList>
    </citation>
    <scope>NUCLEOTIDE SEQUENCE [LARGE SCALE GENOMIC DNA]</scope>
    <source>
        <strain>ATCC 700550 / JCM 31522 / CIP 106686 / LMG 19005 / NCIMB 14063 / MR-1</strain>
    </source>
</reference>
<comment type="function">
    <text evidence="1">The glycine cleavage system catalyzes the degradation of glycine. The H protein shuttles the methylamine group of glycine from the P protein to the T protein.</text>
</comment>
<comment type="cofactor">
    <cofactor evidence="1">
        <name>(R)-lipoate</name>
        <dbReference type="ChEBI" id="CHEBI:83088"/>
    </cofactor>
    <text evidence="1">Binds 1 lipoyl cofactor covalently.</text>
</comment>
<comment type="subunit">
    <text evidence="1">The glycine cleavage system is composed of four proteins: P, T, L and H.</text>
</comment>
<comment type="similarity">
    <text evidence="1">Belongs to the GcvH family.</text>
</comment>
<proteinExistence type="inferred from homology"/>
<feature type="chain" id="PRO_0000166244" description="Glycine cleavage system H protein">
    <location>
        <begin position="1"/>
        <end position="129"/>
    </location>
</feature>
<feature type="domain" description="Lipoyl-binding" evidence="2">
    <location>
        <begin position="24"/>
        <end position="106"/>
    </location>
</feature>
<feature type="modified residue" description="N6-lipoyllysine" evidence="1">
    <location>
        <position position="65"/>
    </location>
</feature>
<sequence length="129" mass="13992">MSNIPTELKYASSHEWIRKEEDGSYTVGITEHAQELLGDMVFVELPEVGDTVTAGDDCAVAESVKAASDIYAPISGEVIAVNEALEDSPELVNSDAYGEGWFFRVMPSDESEVDALLDAEGYQAVIDEE</sequence>